<name>CHLN_PROMP</name>
<comment type="function">
    <text evidence="1">Component of the dark-operative protochlorophyllide reductase (DPOR) that uses Mg-ATP and reduced ferredoxin to reduce ring D of protochlorophyllide (Pchlide) to form chlorophyllide a (Chlide). This reaction is light-independent. The NB-protein (ChlN-ChlB) is the catalytic component of the complex.</text>
</comment>
<comment type="catalytic activity">
    <reaction evidence="1">
        <text>chlorophyllide a + oxidized 2[4Fe-4S]-[ferredoxin] + 2 ADP + 2 phosphate = protochlorophyllide a + reduced 2[4Fe-4S]-[ferredoxin] + 2 ATP + 2 H2O</text>
        <dbReference type="Rhea" id="RHEA:28202"/>
        <dbReference type="Rhea" id="RHEA-COMP:10002"/>
        <dbReference type="Rhea" id="RHEA-COMP:10004"/>
        <dbReference type="ChEBI" id="CHEBI:15377"/>
        <dbReference type="ChEBI" id="CHEBI:30616"/>
        <dbReference type="ChEBI" id="CHEBI:33722"/>
        <dbReference type="ChEBI" id="CHEBI:33723"/>
        <dbReference type="ChEBI" id="CHEBI:43474"/>
        <dbReference type="ChEBI" id="CHEBI:83348"/>
        <dbReference type="ChEBI" id="CHEBI:83350"/>
        <dbReference type="ChEBI" id="CHEBI:456216"/>
        <dbReference type="EC" id="1.3.7.7"/>
    </reaction>
</comment>
<comment type="cofactor">
    <cofactor evidence="1">
        <name>[4Fe-4S] cluster</name>
        <dbReference type="ChEBI" id="CHEBI:49883"/>
    </cofactor>
    <text evidence="1">Binds 1 [4Fe-4S] cluster per heterodimer. The cluster is bound at the heterodimer interface by residues from both subunits.</text>
</comment>
<comment type="pathway">
    <text evidence="1">Porphyrin-containing compound metabolism; chlorophyll biosynthesis (light-independent).</text>
</comment>
<comment type="subunit">
    <text evidence="1">Protochlorophyllide reductase is composed of three subunits; ChlL, ChlN and ChlB. Forms a heterotetramer of two ChlB and two ChlN subunits.</text>
</comment>
<comment type="similarity">
    <text evidence="1">Belongs to the BchN/ChlN family.</text>
</comment>
<reference key="1">
    <citation type="journal article" date="2003" name="Nature">
        <title>Genome divergence in two Prochlorococcus ecotypes reflects oceanic niche differentiation.</title>
        <authorList>
            <person name="Rocap G."/>
            <person name="Larimer F.W."/>
            <person name="Lamerdin J.E."/>
            <person name="Malfatti S."/>
            <person name="Chain P."/>
            <person name="Ahlgren N.A."/>
            <person name="Arellano A."/>
            <person name="Coleman M."/>
            <person name="Hauser L."/>
            <person name="Hess W.R."/>
            <person name="Johnson Z.I."/>
            <person name="Land M.L."/>
            <person name="Lindell D."/>
            <person name="Post A.F."/>
            <person name="Regala W."/>
            <person name="Shah M."/>
            <person name="Shaw S.L."/>
            <person name="Steglich C."/>
            <person name="Sullivan M.B."/>
            <person name="Ting C.S."/>
            <person name="Tolonen A."/>
            <person name="Webb E.A."/>
            <person name="Zinser E.R."/>
            <person name="Chisholm S.W."/>
        </authorList>
    </citation>
    <scope>NUCLEOTIDE SEQUENCE [LARGE SCALE GENOMIC DNA]</scope>
    <source>
        <strain>CCMP1986 / NIES-2087 / MED4</strain>
    </source>
</reference>
<accession>Q7V2D5</accession>
<protein>
    <recommendedName>
        <fullName evidence="1">Light-independent protochlorophyllide reductase subunit N</fullName>
        <shortName evidence="1">DPOR subunit N</shortName>
        <shortName evidence="1">LI-POR subunit N</shortName>
        <ecNumber evidence="1">1.3.7.7</ecNumber>
    </recommendedName>
</protein>
<gene>
    <name evidence="1" type="primary">chlN</name>
    <name type="ordered locus">PMM0545</name>
</gene>
<feature type="chain" id="PRO_0000324018" description="Light-independent protochlorophyllide reductase subunit N">
    <location>
        <begin position="1"/>
        <end position="418"/>
    </location>
</feature>
<feature type="binding site" evidence="1">
    <location>
        <position position="17"/>
    </location>
    <ligand>
        <name>[4Fe-4S] cluster</name>
        <dbReference type="ChEBI" id="CHEBI:49883"/>
        <note>ligand shared with heterodimeric partner</note>
    </ligand>
</feature>
<feature type="binding site" evidence="1">
    <location>
        <position position="42"/>
    </location>
    <ligand>
        <name>[4Fe-4S] cluster</name>
        <dbReference type="ChEBI" id="CHEBI:49883"/>
        <note>ligand shared with heterodimeric partner</note>
    </ligand>
</feature>
<feature type="binding site" evidence="1">
    <location>
        <position position="103"/>
    </location>
    <ligand>
        <name>[4Fe-4S] cluster</name>
        <dbReference type="ChEBI" id="CHEBI:49883"/>
        <note>ligand shared with heterodimeric partner</note>
    </ligand>
</feature>
<dbReference type="EC" id="1.3.7.7" evidence="1"/>
<dbReference type="EMBL" id="BX548174">
    <property type="protein sequence ID" value="CAE19004.1"/>
    <property type="molecule type" value="Genomic_DNA"/>
</dbReference>
<dbReference type="RefSeq" id="WP_011132180.1">
    <property type="nucleotide sequence ID" value="NC_005072.1"/>
</dbReference>
<dbReference type="SMR" id="Q7V2D5"/>
<dbReference type="STRING" id="59919.PMM0545"/>
<dbReference type="KEGG" id="pmm:PMM0545"/>
<dbReference type="eggNOG" id="COG2710">
    <property type="taxonomic scope" value="Bacteria"/>
</dbReference>
<dbReference type="HOGENOM" id="CLU_037170_0_0_3"/>
<dbReference type="OrthoDB" id="5714774at2"/>
<dbReference type="UniPathway" id="UPA00670"/>
<dbReference type="Proteomes" id="UP000001026">
    <property type="component" value="Chromosome"/>
</dbReference>
<dbReference type="GO" id="GO:0051539">
    <property type="term" value="F:4 iron, 4 sulfur cluster binding"/>
    <property type="evidence" value="ECO:0007669"/>
    <property type="project" value="UniProtKB-UniRule"/>
</dbReference>
<dbReference type="GO" id="GO:0005524">
    <property type="term" value="F:ATP binding"/>
    <property type="evidence" value="ECO:0007669"/>
    <property type="project" value="UniProtKB-UniRule"/>
</dbReference>
<dbReference type="GO" id="GO:0046872">
    <property type="term" value="F:metal ion binding"/>
    <property type="evidence" value="ECO:0007669"/>
    <property type="project" value="UniProtKB-KW"/>
</dbReference>
<dbReference type="GO" id="GO:0016730">
    <property type="term" value="F:oxidoreductase activity, acting on iron-sulfur proteins as donors"/>
    <property type="evidence" value="ECO:0007669"/>
    <property type="project" value="InterPro"/>
</dbReference>
<dbReference type="GO" id="GO:0016636">
    <property type="term" value="F:oxidoreductase activity, acting on the CH-CH group of donors, iron-sulfur protein as acceptor"/>
    <property type="evidence" value="ECO:0007669"/>
    <property type="project" value="UniProtKB-UniRule"/>
</dbReference>
<dbReference type="GO" id="GO:0036068">
    <property type="term" value="P:light-independent chlorophyll biosynthetic process"/>
    <property type="evidence" value="ECO:0007669"/>
    <property type="project" value="UniProtKB-UniRule"/>
</dbReference>
<dbReference type="GO" id="GO:0019685">
    <property type="term" value="P:photosynthesis, dark reaction"/>
    <property type="evidence" value="ECO:0007669"/>
    <property type="project" value="InterPro"/>
</dbReference>
<dbReference type="Gene3D" id="3.40.50.1980">
    <property type="entry name" value="Nitrogenase molybdenum iron protein domain"/>
    <property type="match status" value="3"/>
</dbReference>
<dbReference type="HAMAP" id="MF_00352">
    <property type="entry name" value="ChlN_BchN"/>
    <property type="match status" value="1"/>
</dbReference>
<dbReference type="InterPro" id="IPR050293">
    <property type="entry name" value="LIPOR_BchN/ChlN"/>
</dbReference>
<dbReference type="InterPro" id="IPR000510">
    <property type="entry name" value="Nase/OxRdtase_comp1"/>
</dbReference>
<dbReference type="InterPro" id="IPR005970">
    <property type="entry name" value="Protochl_reductN"/>
</dbReference>
<dbReference type="NCBIfam" id="TIGR01279">
    <property type="entry name" value="DPOR_bchN"/>
    <property type="match status" value="1"/>
</dbReference>
<dbReference type="NCBIfam" id="NF002768">
    <property type="entry name" value="PRK02842.1"/>
    <property type="match status" value="1"/>
</dbReference>
<dbReference type="PANTHER" id="PTHR39429">
    <property type="entry name" value="LIGHT-INDEPENDENT PROTOCHLOROPHYLLIDE REDUCTASE SUBUNIT N"/>
    <property type="match status" value="1"/>
</dbReference>
<dbReference type="PANTHER" id="PTHR39429:SF3">
    <property type="entry name" value="LIGHT-INDEPENDENT PROTOCHLOROPHYLLIDE REDUCTASE SUBUNIT N"/>
    <property type="match status" value="1"/>
</dbReference>
<dbReference type="Pfam" id="PF00148">
    <property type="entry name" value="Oxidored_nitro"/>
    <property type="match status" value="1"/>
</dbReference>
<dbReference type="PIRSF" id="PIRSF000162">
    <property type="entry name" value="P_chlorophyll_rd"/>
    <property type="match status" value="1"/>
</dbReference>
<dbReference type="SUPFAM" id="SSF53807">
    <property type="entry name" value="Helical backbone' metal receptor"/>
    <property type="match status" value="1"/>
</dbReference>
<keyword id="KW-0004">4Fe-4S</keyword>
<keyword id="KW-0067">ATP-binding</keyword>
<keyword id="KW-0149">Chlorophyll biosynthesis</keyword>
<keyword id="KW-0408">Iron</keyword>
<keyword id="KW-0411">Iron-sulfur</keyword>
<keyword id="KW-0479">Metal-binding</keyword>
<keyword id="KW-0547">Nucleotide-binding</keyword>
<keyword id="KW-0560">Oxidoreductase</keyword>
<keyword id="KW-0602">Photosynthesis</keyword>
<sequence>MSKVDLNKETGPREVFCGLTSIVWLHRRMPDAFFLVVGSRTCAHLIQSAAGVMIFAEPRFGTAILEEKDLAGLADAHEELDRVVNDLISRRPEIKTLFLVGSCPSEVIKLDLATVAEKLNSRFLGQVRFVNYSGSGIETTFTQGEDGALKALVPLMESTDDEKLLLVGTLANNVEDRFKKIFNNIGITNVESFPPRQSTELPKIGKNTKVLLAQPYLSDTVRDLKHRGCGIIQAPFPLGVEGSTKWVLAAAAAFKIHELKVHEVIAPLANRARQAIEKHKEILRGKKLFLLPESQLEISLARFLHNECEMELIEVGTPYLNRDLMEEELNLLPDDTKIVEGQHVEKQLDRVRASNPDLVVCGMGLANPLEAEGISTKWSIEMVFSPIHGIDQAADLAGLFSRPLTRNQILTSKSLATH</sequence>
<proteinExistence type="inferred from homology"/>
<organism>
    <name type="scientific">Prochlorococcus marinus subsp. pastoris (strain CCMP1986 / NIES-2087 / MED4)</name>
    <dbReference type="NCBI Taxonomy" id="59919"/>
    <lineage>
        <taxon>Bacteria</taxon>
        <taxon>Bacillati</taxon>
        <taxon>Cyanobacteriota</taxon>
        <taxon>Cyanophyceae</taxon>
        <taxon>Synechococcales</taxon>
        <taxon>Prochlorococcaceae</taxon>
        <taxon>Prochlorococcus</taxon>
    </lineage>
</organism>
<evidence type="ECO:0000255" key="1">
    <source>
        <dbReference type="HAMAP-Rule" id="MF_00352"/>
    </source>
</evidence>